<feature type="chain" id="PRO_0000097143" description="DENN domain-containing protein 5A">
    <location>
        <begin position="1"/>
        <end position="1287"/>
    </location>
</feature>
<feature type="domain" description="uDENN" evidence="5">
    <location>
        <begin position="57"/>
        <end position="259"/>
    </location>
</feature>
<feature type="domain" description="cDENN" evidence="5">
    <location>
        <begin position="278"/>
        <end position="414"/>
    </location>
</feature>
<feature type="domain" description="dDENN" evidence="5">
    <location>
        <begin position="416"/>
        <end position="598"/>
    </location>
</feature>
<feature type="domain" description="RUN 1" evidence="4">
    <location>
        <begin position="787"/>
        <end position="950"/>
    </location>
</feature>
<feature type="domain" description="PLAT" evidence="3">
    <location>
        <begin position="954"/>
        <end position="1062"/>
    </location>
</feature>
<feature type="domain" description="RUN 2" evidence="4">
    <location>
        <begin position="1134"/>
        <end position="1280"/>
    </location>
</feature>
<feature type="modified residue" description="Phosphoserine" evidence="2">
    <location>
        <position position="193"/>
    </location>
</feature>
<feature type="modified residue" description="Phosphothreonine" evidence="10">
    <location>
        <position position="1079"/>
    </location>
</feature>
<feature type="modified residue" description="Phosphoserine" evidence="10">
    <location>
        <position position="1085"/>
    </location>
</feature>
<feature type="modified residue" description="Phosphoserine" evidence="2">
    <location>
        <position position="1087"/>
    </location>
</feature>
<feature type="modified residue" description="Phosphoserine" evidence="2">
    <location>
        <position position="1096"/>
    </location>
</feature>
<feature type="mutagenesis site" description="Abolishes the interaction with RAP6A and localization to Golgi membrane." evidence="6">
    <original>K</original>
    <variation>E</variation>
    <location>
        <position position="763"/>
    </location>
</feature>
<feature type="mutagenesis site" description="Abolishes the interaction with RAP6A and localization to Golgi membrane; when associated with Ala-935." evidence="6">
    <original>Y</original>
    <variation>S</variation>
    <location>
        <position position="932"/>
    </location>
</feature>
<feature type="mutagenesis site" description="Abolishes the interaction with RAP6A and localization to Golgi membrane; when associated with Ser-932." evidence="6">
    <original>L</original>
    <variation>A</variation>
    <location>
        <position position="935"/>
    </location>
</feature>
<feature type="sequence conflict" description="In Ref. 1; CAB55599." evidence="9" ref="1">
    <location>
        <begin position="37"/>
        <end position="60"/>
    </location>
</feature>
<feature type="sequence conflict" description="In Ref. 4; AAA78787." evidence="9" ref="4">
    <original>T</original>
    <variation>E</variation>
    <location>
        <position position="706"/>
    </location>
</feature>
<feature type="sequence conflict" description="In Ref. 3; BAC33389." evidence="9" ref="3">
    <original>K</original>
    <variation>E</variation>
    <location>
        <position position="761"/>
    </location>
</feature>
<feature type="sequence conflict" description="In Ref. 4; AAA78787." evidence="9" ref="4">
    <original>IQ</original>
    <variation>ME</variation>
    <location>
        <begin position="871"/>
        <end position="872"/>
    </location>
</feature>
<feature type="sequence conflict" description="In Ref. 4; AAA78787." evidence="9" ref="4">
    <original>VRL</original>
    <variation>GAT</variation>
    <location>
        <begin position="888"/>
        <end position="890"/>
    </location>
</feature>
<feature type="helix" evidence="11">
    <location>
        <begin position="742"/>
        <end position="772"/>
    </location>
</feature>
<feature type="helix" evidence="11">
    <location>
        <begin position="784"/>
        <end position="805"/>
    </location>
</feature>
<feature type="strand" evidence="11">
    <location>
        <begin position="806"/>
        <end position="808"/>
    </location>
</feature>
<feature type="strand" evidence="11">
    <location>
        <begin position="812"/>
        <end position="814"/>
    </location>
</feature>
<feature type="helix" evidence="11">
    <location>
        <begin position="816"/>
        <end position="830"/>
    </location>
</feature>
<feature type="helix" evidence="11">
    <location>
        <begin position="864"/>
        <end position="872"/>
    </location>
</feature>
<feature type="helix" evidence="11">
    <location>
        <begin position="880"/>
        <end position="894"/>
    </location>
</feature>
<feature type="helix" evidence="11">
    <location>
        <begin position="897"/>
        <end position="904"/>
    </location>
</feature>
<feature type="helix" evidence="11">
    <location>
        <begin position="908"/>
        <end position="914"/>
    </location>
</feature>
<feature type="turn" evidence="11">
    <location>
        <begin position="920"/>
        <end position="922"/>
    </location>
</feature>
<feature type="helix" evidence="11">
    <location>
        <begin position="924"/>
        <end position="934"/>
    </location>
</feature>
<feature type="helix" evidence="11">
    <location>
        <begin position="935"/>
        <end position="938"/>
    </location>
</feature>
<feature type="turn" evidence="11">
    <location>
        <begin position="944"/>
        <end position="948"/>
    </location>
</feature>
<feature type="strand" evidence="11">
    <location>
        <begin position="952"/>
        <end position="962"/>
    </location>
</feature>
<feature type="strand" evidence="11">
    <location>
        <begin position="975"/>
        <end position="983"/>
    </location>
</feature>
<feature type="strand" evidence="11">
    <location>
        <begin position="997"/>
        <end position="1003"/>
    </location>
</feature>
<feature type="strand" evidence="11">
    <location>
        <begin position="1007"/>
        <end position="1015"/>
    </location>
</feature>
<feature type="strand" evidence="11">
    <location>
        <begin position="1024"/>
        <end position="1033"/>
    </location>
</feature>
<feature type="turn" evidence="11">
    <location>
        <begin position="1034"/>
        <end position="1036"/>
    </location>
</feature>
<feature type="strand" evidence="11">
    <location>
        <begin position="1039"/>
        <end position="1049"/>
    </location>
</feature>
<feature type="strand" evidence="11">
    <location>
        <begin position="1057"/>
        <end position="1062"/>
    </location>
</feature>
<proteinExistence type="evidence at protein level"/>
<keyword id="KW-0002">3D-structure</keyword>
<keyword id="KW-0333">Golgi apparatus</keyword>
<keyword id="KW-0344">Guanine-nucleotide releasing factor</keyword>
<keyword id="KW-0472">Membrane</keyword>
<keyword id="KW-0597">Phosphoprotein</keyword>
<keyword id="KW-1185">Reference proteome</keyword>
<keyword id="KW-0677">Repeat</keyword>
<protein>
    <recommendedName>
        <fullName>DENN domain-containing protein 5A</fullName>
    </recommendedName>
    <alternativeName>
        <fullName>Rab6-interacting protein 1</fullName>
        <shortName>Rab6IP1</shortName>
    </alternativeName>
</protein>
<comment type="function">
    <text evidence="1 2">Guanine nucleotide exchange factor (GEF) which may activate RAB6A and RAB39A and/or RAB39B. Promotes the exchange of GDP to GTP, converting inactive GDP-bound Rab proteins into their active GTP-bound form (By similarity). Involved in the negative regulation of neurite outgrowth (By similarity).</text>
</comment>
<comment type="subunit">
    <text evidence="6 8">Interacts with RAB6A bound to GTP.</text>
</comment>
<comment type="interaction">
    <interactant intactId="EBI-15750630">
        <id>Q6PAL8</id>
    </interactant>
    <interactant intactId="EBI-8851226">
        <id>P20340-1</id>
        <label>RAB6A</label>
    </interactant>
    <organismsDiffer>true</organismsDiffer>
    <experiments>4</experiments>
</comment>
<comment type="subcellular location">
    <subcellularLocation>
        <location evidence="6 7">Golgi apparatus membrane</location>
    </subcellularLocation>
</comment>
<comment type="similarity">
    <text evidence="9">Belongs to the RAB6IP1 family.</text>
</comment>
<sequence>MSGGGGGGGSAPSRFADYFVICGLDTETGLEPDELSALCQYIQASKARDGASPFISSTTEGENFEQTPLRRTFKSKVLARYPENVDWNPFDQDAVGMLCMPKGLAFKTQADPREPQFHAFIITREDGSRTFGFALTFYEEVTSKQICSAMQTLYHMHNAEYDVLHAPLADGGDQSGMEDGEGIPGTKLQRFNSYDISRDTLYVSKCICLITPMSFMKACRSVLQQLHQAVTSPQPPPLPLESYIYNVLYEVPLPPPGRSLKFSGVYGPIICQRPSTNELPLFDFPVKEVFELLGVENVFQLFTCALLEFQILLYSQHYQRLMTVAETITALMFPFQWQHVYVPILPASLLHFLDAPVPYLMGLHSNGLDDRSKLELPQEANLCFVDVDNHFIELPEDLPQFPNKLEFVQEVSEILMAFGVPPEGNLHCSESASKLKRIRASELVSDKRNGNIAGSPLHSYELLKENETIARLQALVKRTGVSLEKLEVREDPSSNKDFKVQCDEEELRIYQLNIQIREVFANRFTQMFADYEVFVIQPSQDKESWFTNREQMQNFDKASFLSDQPEPYLPFLSRFLETQMFASFIDNKIMCHDDDDKDPVLRVFDSRVDKIRLLNVRTPTLRTSMYQKCTTVDEAEKAIELRLAKIDHTAVHPHLLDMKIGQGKYEPGFFPKLQSDVLCTGPASNKWTKRNAPAQWRRKDRQKQHTEHLRLDNDQREKYIQEARNMGSTIRQPKLSNLSPSVIAQTNWKFVEGLLKECRNKTKRMLVEKMGREAVELGHGEVNITGVEENTLIASLCDLLERIWSHGLQVKQGKSALWSHLLHYQENRQRKLTSGSLSTSGILLDSERRKSDASAVMSPLRISLIQDMRHIQNIGEIKTDVGKARAWVRLSMEKKLLSRHLKQLLSDHELTKKLYKRYAFLRCDDEKEQFLYHLLSFNAVDYFCFTNVFTTILIPYHILIVPSKKLGGSMFTANPWICISGELGETQILQIPRNVLEMTFECQNLGKLTTVQIGHDNSGLYAKWLVECVMVRNEVTGHTYKFPCGRWLGKGMDDGSLERVLVGELLTSLPEVDERPCRTPPLQQSPSVIRRLVTISPNNKPKLNTGQIQESIGEAVNGIVKHFHKPEKERGSLTLLLCGECGLVSALEQAFQHGFKSPRLFKNVFIWDFLEKAQTYYETLEQNDVVPEENWHTRARNFCRFVTAVNNTPRNIGKDGKFQMLVCLGARDHLLHHWIALLADCPITAHMYEDVALIKDHTLVNSLIRVLQTLQEFNITLDTSLVKGIDI</sequence>
<reference key="1">
    <citation type="submission" date="1999-09" db="EMBL/GenBank/DDBJ databases">
        <authorList>
            <person name="Goud B."/>
        </authorList>
    </citation>
    <scope>NUCLEOTIDE SEQUENCE [MRNA]</scope>
    <source>
        <strain>ICR</strain>
    </source>
</reference>
<reference key="2">
    <citation type="journal article" date="2004" name="Genome Res.">
        <title>The status, quality, and expansion of the NIH full-length cDNA project: the Mammalian Gene Collection (MGC).</title>
        <authorList>
            <consortium name="The MGC Project Team"/>
        </authorList>
    </citation>
    <scope>NUCLEOTIDE SEQUENCE [LARGE SCALE MRNA]</scope>
    <source>
        <strain>C57BL/6J</strain>
        <tissue>Brain</tissue>
        <tissue>Mammary gland</tissue>
    </source>
</reference>
<reference key="3">
    <citation type="journal article" date="2005" name="Science">
        <title>The transcriptional landscape of the mammalian genome.</title>
        <authorList>
            <person name="Carninci P."/>
            <person name="Kasukawa T."/>
            <person name="Katayama S."/>
            <person name="Gough J."/>
            <person name="Frith M.C."/>
            <person name="Maeda N."/>
            <person name="Oyama R."/>
            <person name="Ravasi T."/>
            <person name="Lenhard B."/>
            <person name="Wells C."/>
            <person name="Kodzius R."/>
            <person name="Shimokawa K."/>
            <person name="Bajic V.B."/>
            <person name="Brenner S.E."/>
            <person name="Batalov S."/>
            <person name="Forrest A.R."/>
            <person name="Zavolan M."/>
            <person name="Davis M.J."/>
            <person name="Wilming L.G."/>
            <person name="Aidinis V."/>
            <person name="Allen J.E."/>
            <person name="Ambesi-Impiombato A."/>
            <person name="Apweiler R."/>
            <person name="Aturaliya R.N."/>
            <person name="Bailey T.L."/>
            <person name="Bansal M."/>
            <person name="Baxter L."/>
            <person name="Beisel K.W."/>
            <person name="Bersano T."/>
            <person name="Bono H."/>
            <person name="Chalk A.M."/>
            <person name="Chiu K.P."/>
            <person name="Choudhary V."/>
            <person name="Christoffels A."/>
            <person name="Clutterbuck D.R."/>
            <person name="Crowe M.L."/>
            <person name="Dalla E."/>
            <person name="Dalrymple B.P."/>
            <person name="de Bono B."/>
            <person name="Della Gatta G."/>
            <person name="di Bernardo D."/>
            <person name="Down T."/>
            <person name="Engstrom P."/>
            <person name="Fagiolini M."/>
            <person name="Faulkner G."/>
            <person name="Fletcher C.F."/>
            <person name="Fukushima T."/>
            <person name="Furuno M."/>
            <person name="Futaki S."/>
            <person name="Gariboldi M."/>
            <person name="Georgii-Hemming P."/>
            <person name="Gingeras T.R."/>
            <person name="Gojobori T."/>
            <person name="Green R.E."/>
            <person name="Gustincich S."/>
            <person name="Harbers M."/>
            <person name="Hayashi Y."/>
            <person name="Hensch T.K."/>
            <person name="Hirokawa N."/>
            <person name="Hill D."/>
            <person name="Huminiecki L."/>
            <person name="Iacono M."/>
            <person name="Ikeo K."/>
            <person name="Iwama A."/>
            <person name="Ishikawa T."/>
            <person name="Jakt M."/>
            <person name="Kanapin A."/>
            <person name="Katoh M."/>
            <person name="Kawasawa Y."/>
            <person name="Kelso J."/>
            <person name="Kitamura H."/>
            <person name="Kitano H."/>
            <person name="Kollias G."/>
            <person name="Krishnan S.P."/>
            <person name="Kruger A."/>
            <person name="Kummerfeld S.K."/>
            <person name="Kurochkin I.V."/>
            <person name="Lareau L.F."/>
            <person name="Lazarevic D."/>
            <person name="Lipovich L."/>
            <person name="Liu J."/>
            <person name="Liuni S."/>
            <person name="McWilliam S."/>
            <person name="Madan Babu M."/>
            <person name="Madera M."/>
            <person name="Marchionni L."/>
            <person name="Matsuda H."/>
            <person name="Matsuzawa S."/>
            <person name="Miki H."/>
            <person name="Mignone F."/>
            <person name="Miyake S."/>
            <person name="Morris K."/>
            <person name="Mottagui-Tabar S."/>
            <person name="Mulder N."/>
            <person name="Nakano N."/>
            <person name="Nakauchi H."/>
            <person name="Ng P."/>
            <person name="Nilsson R."/>
            <person name="Nishiguchi S."/>
            <person name="Nishikawa S."/>
            <person name="Nori F."/>
            <person name="Ohara O."/>
            <person name="Okazaki Y."/>
            <person name="Orlando V."/>
            <person name="Pang K.C."/>
            <person name="Pavan W.J."/>
            <person name="Pavesi G."/>
            <person name="Pesole G."/>
            <person name="Petrovsky N."/>
            <person name="Piazza S."/>
            <person name="Reed J."/>
            <person name="Reid J.F."/>
            <person name="Ring B.Z."/>
            <person name="Ringwald M."/>
            <person name="Rost B."/>
            <person name="Ruan Y."/>
            <person name="Salzberg S.L."/>
            <person name="Sandelin A."/>
            <person name="Schneider C."/>
            <person name="Schoenbach C."/>
            <person name="Sekiguchi K."/>
            <person name="Semple C.A."/>
            <person name="Seno S."/>
            <person name="Sessa L."/>
            <person name="Sheng Y."/>
            <person name="Shibata Y."/>
            <person name="Shimada H."/>
            <person name="Shimada K."/>
            <person name="Silva D."/>
            <person name="Sinclair B."/>
            <person name="Sperling S."/>
            <person name="Stupka E."/>
            <person name="Sugiura K."/>
            <person name="Sultana R."/>
            <person name="Takenaka Y."/>
            <person name="Taki K."/>
            <person name="Tammoja K."/>
            <person name="Tan S.L."/>
            <person name="Tang S."/>
            <person name="Taylor M.S."/>
            <person name="Tegner J."/>
            <person name="Teichmann S.A."/>
            <person name="Ueda H.R."/>
            <person name="van Nimwegen E."/>
            <person name="Verardo R."/>
            <person name="Wei C.L."/>
            <person name="Yagi K."/>
            <person name="Yamanishi H."/>
            <person name="Zabarovsky E."/>
            <person name="Zhu S."/>
            <person name="Zimmer A."/>
            <person name="Hide W."/>
            <person name="Bult C."/>
            <person name="Grimmond S.M."/>
            <person name="Teasdale R.D."/>
            <person name="Liu E.T."/>
            <person name="Brusic V."/>
            <person name="Quackenbush J."/>
            <person name="Wahlestedt C."/>
            <person name="Mattick J.S."/>
            <person name="Hume D.A."/>
            <person name="Kai C."/>
            <person name="Sasaki D."/>
            <person name="Tomaru Y."/>
            <person name="Fukuda S."/>
            <person name="Kanamori-Katayama M."/>
            <person name="Suzuki M."/>
            <person name="Aoki J."/>
            <person name="Arakawa T."/>
            <person name="Iida J."/>
            <person name="Imamura K."/>
            <person name="Itoh M."/>
            <person name="Kato T."/>
            <person name="Kawaji H."/>
            <person name="Kawagashira N."/>
            <person name="Kawashima T."/>
            <person name="Kojima M."/>
            <person name="Kondo S."/>
            <person name="Konno H."/>
            <person name="Nakano K."/>
            <person name="Ninomiya N."/>
            <person name="Nishio T."/>
            <person name="Okada M."/>
            <person name="Plessy C."/>
            <person name="Shibata K."/>
            <person name="Shiraki T."/>
            <person name="Suzuki S."/>
            <person name="Tagami M."/>
            <person name="Waki K."/>
            <person name="Watahiki A."/>
            <person name="Okamura-Oho Y."/>
            <person name="Suzuki H."/>
            <person name="Kawai J."/>
            <person name="Hayashizaki Y."/>
        </authorList>
    </citation>
    <scope>NUCLEOTIDE SEQUENCE [LARGE SCALE MRNA] OF 703-1287</scope>
    <source>
        <strain>C57BL/6J</strain>
        <tissue>Head</tissue>
    </source>
</reference>
<reference key="4">
    <citation type="journal article" date="1995" name="J. Biol. Chem.">
        <title>Two-hybrid system screen with the small GTP-binding protein Rab6. Identification of a novel mouse GDP dissociation inhibitor isoform and two other potential partners of Rab6.</title>
        <authorList>
            <person name="Janoueix-Lerosey I."/>
            <person name="Jollivet F."/>
            <person name="Camonis J."/>
            <person name="Marche P.N."/>
            <person name="Goud B."/>
        </authorList>
    </citation>
    <scope>NUCLEOTIDE SEQUENCE [MRNA] OF 705-890</scope>
    <scope>INTERACTION WITH RAB6A</scope>
    <source>
        <strain>BALB/cJ</strain>
        <tissue>Brain</tissue>
    </source>
</reference>
<reference key="5">
    <citation type="journal article" date="2010" name="Cell">
        <title>A tissue-specific atlas of mouse protein phosphorylation and expression.</title>
        <authorList>
            <person name="Huttlin E.L."/>
            <person name="Jedrychowski M.P."/>
            <person name="Elias J.E."/>
            <person name="Goswami T."/>
            <person name="Rad R."/>
            <person name="Beausoleil S.A."/>
            <person name="Villen J."/>
            <person name="Haas W."/>
            <person name="Sowa M.E."/>
            <person name="Gygi S.P."/>
        </authorList>
    </citation>
    <scope>PHOSPHORYLATION [LARGE SCALE ANALYSIS] AT THR-1079 AND SER-1085</scope>
    <scope>IDENTIFICATION BY MASS SPECTROMETRY [LARGE SCALE ANALYSIS]</scope>
    <source>
        <tissue>Brain</tissue>
        <tissue>Heart</tissue>
        <tissue>Kidney</tissue>
        <tissue>Lung</tissue>
        <tissue>Spleen</tissue>
        <tissue>Testis</tissue>
    </source>
</reference>
<reference key="6">
    <citation type="journal article" date="2012" name="PLoS ONE">
        <title>Mapping the interactions between a RUN domain from DENND5/Rab6IP1 and sorting nexin 1.</title>
        <authorList>
            <person name="Fernandes H."/>
            <person name="Franklin E."/>
            <person name="Jollivet F."/>
            <person name="Bliedtner K."/>
            <person name="Khan A.R."/>
        </authorList>
    </citation>
    <scope>SUBCELLULAR LOCATION</scope>
</reference>
<reference key="7">
    <citation type="journal article" date="2009" name="Structure">
        <title>Structural basis for recruitment of Rab6-interacting protein 1 to Golgi via a RUN domain.</title>
        <authorList>
            <person name="Recacha R."/>
            <person name="Boulet A."/>
            <person name="Jollivet F."/>
            <person name="Monier S."/>
            <person name="Houdusse A."/>
            <person name="Goud B."/>
            <person name="Khan A.R."/>
        </authorList>
    </citation>
    <scope>X-RAY CRYSTALLOGRAPHY (3.2 ANGSTROMS) OF 707-1090 IN COMPLEX WITH RAB6A</scope>
    <scope>SUBCELLULAR LOCATION</scope>
    <scope>MUTAGENESIS OF LYS-763; TYR-932 AND LEU-935</scope>
</reference>
<gene>
    <name type="primary">Dennd5a</name>
    <name type="synonym">Rab6ip1</name>
</gene>
<dbReference type="EMBL" id="AJ245569">
    <property type="protein sequence ID" value="CAB55599.1"/>
    <property type="molecule type" value="mRNA"/>
</dbReference>
<dbReference type="EMBL" id="BC022119">
    <property type="protein sequence ID" value="AAH22119.1"/>
    <property type="molecule type" value="mRNA"/>
</dbReference>
<dbReference type="EMBL" id="BC060230">
    <property type="protein sequence ID" value="AAH60230.1"/>
    <property type="molecule type" value="mRNA"/>
</dbReference>
<dbReference type="EMBL" id="AK048609">
    <property type="protein sequence ID" value="BAC33389.1"/>
    <property type="molecule type" value="mRNA"/>
</dbReference>
<dbReference type="EMBL" id="L40894">
    <property type="protein sequence ID" value="AAA78787.1"/>
    <property type="molecule type" value="mRNA"/>
</dbReference>
<dbReference type="CCDS" id="CCDS21741.1"/>
<dbReference type="PIR" id="A56956">
    <property type="entry name" value="A56956"/>
</dbReference>
<dbReference type="RefSeq" id="NP_001298068.1">
    <property type="nucleotide sequence ID" value="NM_001311139.1"/>
</dbReference>
<dbReference type="RefSeq" id="NP_067469.1">
    <property type="nucleotide sequence ID" value="NM_021494.1"/>
</dbReference>
<dbReference type="PDB" id="3CWZ">
    <property type="method" value="X-ray"/>
    <property type="resolution" value="3.20 A"/>
    <property type="chains" value="B=707-1090"/>
</dbReference>
<dbReference type="PDBsum" id="3CWZ"/>
<dbReference type="SMR" id="Q6PAL8"/>
<dbReference type="BioGRID" id="202551">
    <property type="interactions" value="7"/>
</dbReference>
<dbReference type="DIP" id="DIP-287N"/>
<dbReference type="FunCoup" id="Q6PAL8">
    <property type="interactions" value="2740"/>
</dbReference>
<dbReference type="IntAct" id="Q6PAL8">
    <property type="interactions" value="1"/>
</dbReference>
<dbReference type="STRING" id="10090.ENSMUSP00000079295"/>
<dbReference type="GlyGen" id="Q6PAL8">
    <property type="glycosylation" value="2 sites, 2 N-linked glycans (2 sites)"/>
</dbReference>
<dbReference type="iPTMnet" id="Q6PAL8"/>
<dbReference type="PhosphoSitePlus" id="Q6PAL8"/>
<dbReference type="jPOST" id="Q6PAL8"/>
<dbReference type="PaxDb" id="10090-ENSMUSP00000079295"/>
<dbReference type="PeptideAtlas" id="Q6PAL8"/>
<dbReference type="ProteomicsDB" id="279621"/>
<dbReference type="Pumba" id="Q6PAL8"/>
<dbReference type="Antibodypedia" id="24203">
    <property type="antibodies" value="105 antibodies from 19 providers"/>
</dbReference>
<dbReference type="DNASU" id="19347"/>
<dbReference type="Ensembl" id="ENSMUST00000080437.13">
    <property type="protein sequence ID" value="ENSMUSP00000079295.7"/>
    <property type="gene ID" value="ENSMUSG00000035901.15"/>
</dbReference>
<dbReference type="GeneID" id="19347"/>
<dbReference type="KEGG" id="mmu:19347"/>
<dbReference type="UCSC" id="uc009jek.1">
    <property type="organism name" value="mouse"/>
</dbReference>
<dbReference type="AGR" id="MGI:1201681"/>
<dbReference type="CTD" id="23258"/>
<dbReference type="MGI" id="MGI:1201681">
    <property type="gene designation" value="Dennd5a"/>
</dbReference>
<dbReference type="VEuPathDB" id="HostDB:ENSMUSG00000035901"/>
<dbReference type="eggNOG" id="KOG2080">
    <property type="taxonomic scope" value="Eukaryota"/>
</dbReference>
<dbReference type="GeneTree" id="ENSGT00940000153678"/>
<dbReference type="InParanoid" id="Q6PAL8"/>
<dbReference type="OMA" id="QQPYLHA"/>
<dbReference type="OrthoDB" id="6019893at2759"/>
<dbReference type="PhylomeDB" id="Q6PAL8"/>
<dbReference type="TreeFam" id="TF313237"/>
<dbReference type="Reactome" id="R-MMU-8876198">
    <property type="pathway name" value="RAB GEFs exchange GTP for GDP on RABs"/>
</dbReference>
<dbReference type="BioGRID-ORCS" id="19347">
    <property type="hits" value="1 hit in 77 CRISPR screens"/>
</dbReference>
<dbReference type="ChiTaRS" id="Dennd5a">
    <property type="organism name" value="mouse"/>
</dbReference>
<dbReference type="EvolutionaryTrace" id="Q6PAL8"/>
<dbReference type="PRO" id="PR:Q6PAL8"/>
<dbReference type="Proteomes" id="UP000000589">
    <property type="component" value="Chromosome 7"/>
</dbReference>
<dbReference type="RNAct" id="Q6PAL8">
    <property type="molecule type" value="protein"/>
</dbReference>
<dbReference type="Bgee" id="ENSMUSG00000035901">
    <property type="expression patterns" value="Expressed in cerebellar nuclear complex and 252 other cell types or tissues"/>
</dbReference>
<dbReference type="ExpressionAtlas" id="Q6PAL8">
    <property type="expression patterns" value="baseline and differential"/>
</dbReference>
<dbReference type="GO" id="GO:0005829">
    <property type="term" value="C:cytosol"/>
    <property type="evidence" value="ECO:0007669"/>
    <property type="project" value="GOC"/>
</dbReference>
<dbReference type="GO" id="GO:0005794">
    <property type="term" value="C:Golgi apparatus"/>
    <property type="evidence" value="ECO:0000314"/>
    <property type="project" value="UniProtKB"/>
</dbReference>
<dbReference type="GO" id="GO:0000139">
    <property type="term" value="C:Golgi membrane"/>
    <property type="evidence" value="ECO:0007669"/>
    <property type="project" value="UniProtKB-SubCell"/>
</dbReference>
<dbReference type="GO" id="GO:0030904">
    <property type="term" value="C:retromer complex"/>
    <property type="evidence" value="ECO:0007669"/>
    <property type="project" value="Ensembl"/>
</dbReference>
<dbReference type="GO" id="GO:0005802">
    <property type="term" value="C:trans-Golgi network"/>
    <property type="evidence" value="ECO:0007669"/>
    <property type="project" value="Ensembl"/>
</dbReference>
<dbReference type="GO" id="GO:0005085">
    <property type="term" value="F:guanyl-nucleotide exchange factor activity"/>
    <property type="evidence" value="ECO:0000250"/>
    <property type="project" value="UniProtKB"/>
</dbReference>
<dbReference type="GO" id="GO:0031267">
    <property type="term" value="F:small GTPase binding"/>
    <property type="evidence" value="ECO:0000314"/>
    <property type="project" value="MGI"/>
</dbReference>
<dbReference type="GO" id="GO:0010977">
    <property type="term" value="P:negative regulation of neuron projection development"/>
    <property type="evidence" value="ECO:0000250"/>
    <property type="project" value="UniProtKB"/>
</dbReference>
<dbReference type="GO" id="GO:0042147">
    <property type="term" value="P:retrograde transport, endosome to Golgi"/>
    <property type="evidence" value="ECO:0007669"/>
    <property type="project" value="Ensembl"/>
</dbReference>
<dbReference type="CDD" id="cd01757">
    <property type="entry name" value="PLAT_RAB6IP1"/>
    <property type="match status" value="1"/>
</dbReference>
<dbReference type="CDD" id="cd17690">
    <property type="entry name" value="RUN1_DENND5A"/>
    <property type="match status" value="1"/>
</dbReference>
<dbReference type="CDD" id="cd17692">
    <property type="entry name" value="RUN2_DENND5A"/>
    <property type="match status" value="1"/>
</dbReference>
<dbReference type="FunFam" id="1.20.58.900:FF:000003">
    <property type="entry name" value="DENN domain containing 5A"/>
    <property type="match status" value="1"/>
</dbReference>
<dbReference type="FunFam" id="1.20.58.900:FF:000008">
    <property type="entry name" value="DENN domain containing 5B"/>
    <property type="match status" value="1"/>
</dbReference>
<dbReference type="FunFam" id="2.60.60.20:FF:000001">
    <property type="entry name" value="DENN domain containing 5B"/>
    <property type="match status" value="1"/>
</dbReference>
<dbReference type="FunFam" id="1.20.58.900:FF:000007">
    <property type="entry name" value="DENN domain-containing protein 5B"/>
    <property type="match status" value="1"/>
</dbReference>
<dbReference type="Gene3D" id="1.20.58.900">
    <property type="match status" value="3"/>
</dbReference>
<dbReference type="Gene3D" id="3.30.450.200">
    <property type="match status" value="1"/>
</dbReference>
<dbReference type="Gene3D" id="3.40.50.11500">
    <property type="match status" value="1"/>
</dbReference>
<dbReference type="Gene3D" id="2.60.60.20">
    <property type="entry name" value="PLAT/LH2 domain"/>
    <property type="match status" value="1"/>
</dbReference>
<dbReference type="InterPro" id="IPR001194">
    <property type="entry name" value="cDENN_dom"/>
</dbReference>
<dbReference type="InterPro" id="IPR005112">
    <property type="entry name" value="dDENN_dom"/>
</dbReference>
<dbReference type="InterPro" id="IPR047278">
    <property type="entry name" value="DEN5A/B"/>
</dbReference>
<dbReference type="InterPro" id="IPR043153">
    <property type="entry name" value="DENN_C"/>
</dbReference>
<dbReference type="InterPro" id="IPR001024">
    <property type="entry name" value="PLAT/LH2_dom"/>
</dbReference>
<dbReference type="InterPro" id="IPR036392">
    <property type="entry name" value="PLAT/LH2_dom_sf"/>
</dbReference>
<dbReference type="InterPro" id="IPR047277">
    <property type="entry name" value="PLAT_RAB6IP1"/>
</dbReference>
<dbReference type="InterPro" id="IPR047294">
    <property type="entry name" value="RUN1_DENND5A"/>
</dbReference>
<dbReference type="InterPro" id="IPR047295">
    <property type="entry name" value="RUN2_DENND5A"/>
</dbReference>
<dbReference type="InterPro" id="IPR004012">
    <property type="entry name" value="Run_dom"/>
</dbReference>
<dbReference type="InterPro" id="IPR037213">
    <property type="entry name" value="Run_dom_sf"/>
</dbReference>
<dbReference type="InterPro" id="IPR037516">
    <property type="entry name" value="Tripartite_DENN"/>
</dbReference>
<dbReference type="InterPro" id="IPR005113">
    <property type="entry name" value="uDENN_dom"/>
</dbReference>
<dbReference type="PANTHER" id="PTHR46070:SF2">
    <property type="entry name" value="DENN DOMAIN-CONTAINING PROTEIN 5A"/>
    <property type="match status" value="1"/>
</dbReference>
<dbReference type="PANTHER" id="PTHR46070">
    <property type="entry name" value="PINSTRIPE, ISOFORM A"/>
    <property type="match status" value="1"/>
</dbReference>
<dbReference type="Pfam" id="PF03455">
    <property type="entry name" value="dDENN"/>
    <property type="match status" value="1"/>
</dbReference>
<dbReference type="Pfam" id="PF02141">
    <property type="entry name" value="DENN"/>
    <property type="match status" value="1"/>
</dbReference>
<dbReference type="Pfam" id="PF01477">
    <property type="entry name" value="PLAT"/>
    <property type="match status" value="1"/>
</dbReference>
<dbReference type="Pfam" id="PF02759">
    <property type="entry name" value="RUN"/>
    <property type="match status" value="2"/>
</dbReference>
<dbReference type="Pfam" id="PF03456">
    <property type="entry name" value="uDENN"/>
    <property type="match status" value="1"/>
</dbReference>
<dbReference type="SMART" id="SM00801">
    <property type="entry name" value="dDENN"/>
    <property type="match status" value="1"/>
</dbReference>
<dbReference type="SMART" id="SM00799">
    <property type="entry name" value="DENN"/>
    <property type="match status" value="1"/>
</dbReference>
<dbReference type="SMART" id="SM00593">
    <property type="entry name" value="RUN"/>
    <property type="match status" value="2"/>
</dbReference>
<dbReference type="SMART" id="SM00800">
    <property type="entry name" value="uDENN"/>
    <property type="match status" value="1"/>
</dbReference>
<dbReference type="SUPFAM" id="SSF49723">
    <property type="entry name" value="Lipase/lipooxygenase domain (PLAT/LH2 domain)"/>
    <property type="match status" value="1"/>
</dbReference>
<dbReference type="SUPFAM" id="SSF140741">
    <property type="entry name" value="RUN domain-like"/>
    <property type="match status" value="2"/>
</dbReference>
<dbReference type="PROSITE" id="PS50211">
    <property type="entry name" value="DENN"/>
    <property type="match status" value="1"/>
</dbReference>
<dbReference type="PROSITE" id="PS50095">
    <property type="entry name" value="PLAT"/>
    <property type="match status" value="1"/>
</dbReference>
<dbReference type="PROSITE" id="PS50826">
    <property type="entry name" value="RUN"/>
    <property type="match status" value="2"/>
</dbReference>
<name>DEN5A_MOUSE</name>
<evidence type="ECO:0000250" key="1">
    <source>
        <dbReference type="UniProtKB" id="G3V7Q0"/>
    </source>
</evidence>
<evidence type="ECO:0000250" key="2">
    <source>
        <dbReference type="UniProtKB" id="Q6IQ26"/>
    </source>
</evidence>
<evidence type="ECO:0000255" key="3">
    <source>
        <dbReference type="PROSITE-ProRule" id="PRU00152"/>
    </source>
</evidence>
<evidence type="ECO:0000255" key="4">
    <source>
        <dbReference type="PROSITE-ProRule" id="PRU00178"/>
    </source>
</evidence>
<evidence type="ECO:0000255" key="5">
    <source>
        <dbReference type="PROSITE-ProRule" id="PRU00304"/>
    </source>
</evidence>
<evidence type="ECO:0000269" key="6">
    <source>
    </source>
</evidence>
<evidence type="ECO:0000269" key="7">
    <source>
    </source>
</evidence>
<evidence type="ECO:0000269" key="8">
    <source>
    </source>
</evidence>
<evidence type="ECO:0000305" key="9"/>
<evidence type="ECO:0007744" key="10">
    <source>
    </source>
</evidence>
<evidence type="ECO:0007829" key="11">
    <source>
        <dbReference type="PDB" id="3CWZ"/>
    </source>
</evidence>
<organism>
    <name type="scientific">Mus musculus</name>
    <name type="common">Mouse</name>
    <dbReference type="NCBI Taxonomy" id="10090"/>
    <lineage>
        <taxon>Eukaryota</taxon>
        <taxon>Metazoa</taxon>
        <taxon>Chordata</taxon>
        <taxon>Craniata</taxon>
        <taxon>Vertebrata</taxon>
        <taxon>Euteleostomi</taxon>
        <taxon>Mammalia</taxon>
        <taxon>Eutheria</taxon>
        <taxon>Euarchontoglires</taxon>
        <taxon>Glires</taxon>
        <taxon>Rodentia</taxon>
        <taxon>Myomorpha</taxon>
        <taxon>Muroidea</taxon>
        <taxon>Muridae</taxon>
        <taxon>Murinae</taxon>
        <taxon>Mus</taxon>
        <taxon>Mus</taxon>
    </lineage>
</organism>
<accession>Q6PAL8</accession>
<accession>Q62146</accession>
<accession>Q8C829</accession>
<accession>Q8VDF6</accession>
<accession>Q9QYZ2</accession>